<protein>
    <recommendedName>
        <fullName>ADP-ribosylation factor-like protein 13B</fullName>
    </recommendedName>
    <alternativeName>
        <fullName>ADP-ribosylation factor-like protein 13</fullName>
    </alternativeName>
</protein>
<sequence>MTEKSWFETIFCCCCHRTPIIRREIKLGCFGIGSAGKTTFLKVLKGEDPRDLLRTNGFSTVKMEYDETFHLTIYDVGGDKGIRGIWSNYYAEVHGIIYVIDYSTDETFTESIEALHSLTSNPHVQKKPIFLLLNNQNNREFDDVEISNETKIQAGQHKIVLFSHFNKYNGYLDNIKSATLTVMARAKKDRNEYQEQFVRFIDSISEHYVELSEGVKTAELALRIRQEEAKEQRRLMQMKVEHDALKADVAGLELRNQPPVQPPIPPDPPSDPKSASVHIEESPPMSLASSTIPSDIIQSTPETGTPRDPVNFCRISQTSTKPVSPESNSVKEEPTIILKDNYFLPPKAPGRQYSRIQRIQNVLNNRVVPK</sequence>
<organism>
    <name type="scientific">Caenorhabditis elegans</name>
    <dbReference type="NCBI Taxonomy" id="6239"/>
    <lineage>
        <taxon>Eukaryota</taxon>
        <taxon>Metazoa</taxon>
        <taxon>Ecdysozoa</taxon>
        <taxon>Nematoda</taxon>
        <taxon>Chromadorea</taxon>
        <taxon>Rhabditida</taxon>
        <taxon>Rhabditina</taxon>
        <taxon>Rhabditomorpha</taxon>
        <taxon>Rhabditoidea</taxon>
        <taxon>Rhabditidae</taxon>
        <taxon>Peloderinae</taxon>
        <taxon>Caenorhabditis</taxon>
    </lineage>
</organism>
<reference key="1">
    <citation type="journal article" date="1998" name="Science">
        <title>Genome sequence of the nematode C. elegans: a platform for investigating biology.</title>
        <authorList>
            <consortium name="The C. elegans sequencing consortium"/>
        </authorList>
    </citation>
    <scope>NUCLEOTIDE SEQUENCE [LARGE SCALE GENOMIC DNA]</scope>
    <source>
        <strain>Bristol N2</strain>
    </source>
</reference>
<reference key="2">
    <citation type="journal article" date="2010" name="J. Cell Biol.">
        <title>Joubert syndrome Arl13b functions at ciliary membranes and stabilizes protein transport in Caenorhabditis elegans.</title>
        <authorList>
            <person name="Cevik S."/>
            <person name="Hori Y."/>
            <person name="Kaplan O.I."/>
            <person name="Kida K."/>
            <person name="Toivenon T."/>
            <person name="Foley-Fisher C."/>
            <person name="Cottell D."/>
            <person name="Katada T."/>
            <person name="Kontani K."/>
            <person name="Blacque O.E."/>
        </authorList>
    </citation>
    <scope>FUNCTION</scope>
    <scope>SUBCELLULAR LOCATION</scope>
    <scope>PALMITOYLATION AT CYS-12; CYS-13; CYS-14 AND CYS-15</scope>
    <scope>MUTAGENESIS OF 12-CYS--CYS-15</scope>
</reference>
<reference key="3">
    <citation type="journal article" date="2010" name="J. Cell Biol.">
        <title>The small GTPases ARL-13 and ARL-3 coordinate intraflagellar transport and ciliogenesis.</title>
        <authorList>
            <person name="Li Y."/>
            <person name="Wei Q."/>
            <person name="Zhang Y."/>
            <person name="Ling K."/>
            <person name="Hu J."/>
        </authorList>
    </citation>
    <scope>FUNCTION</scope>
    <scope>SUBCELLULAR LOCATION</scope>
    <scope>TISSUE SPECIFICITY</scope>
    <scope>DISRUPTION PHENOTYPE</scope>
</reference>
<reference key="4">
    <citation type="journal article" date="2012" name="J. Cell Biol.">
        <title>SUMOylation of the small GTPase ARL-13 promotes ciliary targeting of sensory receptors.</title>
        <authorList>
            <person name="Li Y."/>
            <person name="Zhang Q."/>
            <person name="Wei Q."/>
            <person name="Zhang Y."/>
            <person name="Ling K."/>
            <person name="Hu J."/>
        </authorList>
    </citation>
    <scope>SUMOYLATION AT LYS-239 AND LYS-331</scope>
    <scope>MUTAGENESIS OF LYS-45; LYS-62; LYS-230; LYS-239 AND LYS-331</scope>
</reference>
<reference key="5">
    <citation type="journal article" date="2013" name="PLoS Genet.">
        <title>Active transport and diffusion barriers restrict Joubert syndrome-associated ARL13B/ARL-13 to an inv-like ciliary membrane subdomain.</title>
        <authorList>
            <person name="Cevik S."/>
            <person name="Sanders A.A."/>
            <person name="Van Wijk E."/>
            <person name="Boldt K."/>
            <person name="Clarke L."/>
            <person name="van Reeuwijk J."/>
            <person name="Hori Y."/>
            <person name="Horn N."/>
            <person name="Hetterschijt L."/>
            <person name="Wdowicz A."/>
            <person name="Mullins A."/>
            <person name="Kida K."/>
            <person name="Kaplan O.I."/>
            <person name="van Beersum S.E."/>
            <person name="Man Wu K."/>
            <person name="Letteboer S.J."/>
            <person name="Mans D.A."/>
            <person name="Katada T."/>
            <person name="Kontani K."/>
            <person name="Ueffing M."/>
            <person name="Roepman R."/>
            <person name="Kremer H."/>
            <person name="Blacque O.E."/>
        </authorList>
    </citation>
    <scope>SUBCELLULAR LOCATION</scope>
    <scope>MUTAGENESIS OF THR-38 AND 366-ARG--PRO-369</scope>
</reference>
<reference key="6">
    <citation type="journal article" date="2019" name="Elife">
        <title>The Caenorhabditis elegans Tubby homolog dynamically modulates olfactory cilia membrane morphogenesis and phospholipid composition.</title>
        <authorList>
            <person name="DiTirro D."/>
            <person name="Philbrook A."/>
            <person name="Rubino K."/>
            <person name="Sengupta P."/>
        </authorList>
    </citation>
    <scope>SUBCELLULAR LOCATION</scope>
    <scope>TISSUE SPECIFICITY</scope>
</reference>
<comment type="function">
    <text evidence="3 4">Cilium-specific protein required to control the microtubule-based, ciliary axoneme structure. Required for normal sensory cilium function. May act by maintaining the association between IFT subcomplexes A and B.</text>
</comment>
<comment type="subunit">
    <text evidence="1">Monomer.</text>
</comment>
<comment type="subcellular location">
    <subcellularLocation>
        <location evidence="3 4 6 7">Cell projection</location>
        <location evidence="3 4 6 7">Cilium membrane</location>
        <topology evidence="3 4 6">Lipid-anchor</topology>
    </subcellularLocation>
    <text>Associates to the cilium membrane via palmitoylation. Localizes to proximal ciliary membranes, to an inversin-like subciliary membrane compartment, excluding the transition zone.</text>
</comment>
<comment type="alternative products">
    <event type="alternative splicing"/>
    <isoform>
        <id>H2L0N8-1</id>
        <name>a</name>
        <sequence type="displayed"/>
    </isoform>
    <isoform>
        <id>H2L0N8-2</id>
        <name>b</name>
        <sequence type="described" ref="VSP_053886"/>
    </isoform>
</comment>
<comment type="tissue specificity">
    <text evidence="4 7">Specifically expressed in ciliated sensory neurons throughout development in both hermaphrodites.</text>
</comment>
<comment type="domain">
    <text evidence="6">The RVVP region and palmitoylation sites are required for compartmentalization inside cilium to prevent distal cilium and nuclear targeting.</text>
</comment>
<comment type="PTM">
    <text evidence="5">Sumoylation regulates the targeting of membrane sensory receptors to the cilium.</text>
</comment>
<comment type="disruption phenotype">
    <text evidence="4">Shortened cilia with various ultrastructural deformities and a disrupted association between IFT subcomplexes A and B.</text>
</comment>
<comment type="similarity">
    <text evidence="8">Belongs to the small GTPase superfamily. Arf family.</text>
</comment>
<keyword id="KW-0025">Alternative splicing</keyword>
<keyword id="KW-1003">Cell membrane</keyword>
<keyword id="KW-0966">Cell projection</keyword>
<keyword id="KW-0969">Cilium</keyword>
<keyword id="KW-0342">GTP-binding</keyword>
<keyword id="KW-1017">Isopeptide bond</keyword>
<keyword id="KW-0449">Lipoprotein</keyword>
<keyword id="KW-0472">Membrane</keyword>
<keyword id="KW-0547">Nucleotide-binding</keyword>
<keyword id="KW-0564">Palmitate</keyword>
<keyword id="KW-1185">Reference proteome</keyword>
<keyword id="KW-0832">Ubl conjugation</keyword>
<proteinExistence type="evidence at protein level"/>
<evidence type="ECO:0000250" key="1"/>
<evidence type="ECO:0000256" key="2">
    <source>
        <dbReference type="SAM" id="MobiDB-lite"/>
    </source>
</evidence>
<evidence type="ECO:0000269" key="3">
    <source>
    </source>
</evidence>
<evidence type="ECO:0000269" key="4">
    <source>
    </source>
</evidence>
<evidence type="ECO:0000269" key="5">
    <source>
    </source>
</evidence>
<evidence type="ECO:0000269" key="6">
    <source>
    </source>
</evidence>
<evidence type="ECO:0000269" key="7">
    <source>
    </source>
</evidence>
<evidence type="ECO:0000305" key="8"/>
<evidence type="ECO:0000305" key="9">
    <source>
    </source>
</evidence>
<accession>H2L0N8</accession>
<accession>Q2V075</accession>
<name>ARL13_CAEEL</name>
<gene>
    <name type="primary">arl-13</name>
    <name type="ORF">Y37E3.5</name>
</gene>
<feature type="chain" id="PRO_0000425899" description="ADP-ribosylation factor-like protein 13B">
    <location>
        <begin position="1"/>
        <end position="370"/>
    </location>
</feature>
<feature type="region of interest" description="Disordered" evidence="2">
    <location>
        <begin position="255"/>
        <end position="331"/>
    </location>
</feature>
<feature type="region of interest" description="RVVP region">
    <location>
        <begin position="366"/>
        <end position="369"/>
    </location>
</feature>
<feature type="compositionally biased region" description="Pro residues" evidence="2">
    <location>
        <begin position="259"/>
        <end position="271"/>
    </location>
</feature>
<feature type="compositionally biased region" description="Polar residues" evidence="2">
    <location>
        <begin position="287"/>
        <end position="303"/>
    </location>
</feature>
<feature type="compositionally biased region" description="Polar residues" evidence="2">
    <location>
        <begin position="314"/>
        <end position="328"/>
    </location>
</feature>
<feature type="binding site" evidence="1">
    <location>
        <begin position="31"/>
        <end position="38"/>
    </location>
    <ligand>
        <name>GTP</name>
        <dbReference type="ChEBI" id="CHEBI:37565"/>
    </ligand>
</feature>
<feature type="binding site" evidence="1">
    <location>
        <begin position="75"/>
        <end position="79"/>
    </location>
    <ligand>
        <name>GTP</name>
        <dbReference type="ChEBI" id="CHEBI:37565"/>
    </ligand>
</feature>
<feature type="binding site" evidence="1">
    <location>
        <begin position="134"/>
        <end position="137"/>
    </location>
    <ligand>
        <name>GTP</name>
        <dbReference type="ChEBI" id="CHEBI:37565"/>
    </ligand>
</feature>
<feature type="lipid moiety-binding region" description="S-palmitoyl cysteine" evidence="9">
    <location>
        <position position="12"/>
    </location>
</feature>
<feature type="lipid moiety-binding region" description="S-palmitoyl cysteine" evidence="9">
    <location>
        <position position="13"/>
    </location>
</feature>
<feature type="lipid moiety-binding region" description="S-palmitoyl cysteine" evidence="9">
    <location>
        <position position="14"/>
    </location>
</feature>
<feature type="lipid moiety-binding region" description="S-palmitoyl cysteine" evidence="9">
    <location>
        <position position="15"/>
    </location>
</feature>
<feature type="cross-link" description="Glycyl lysine isopeptide (Lys-Gly) (interchain with G-Cter in SUMO)" evidence="5">
    <location>
        <position position="239"/>
    </location>
</feature>
<feature type="cross-link" description="Glycyl lysine isopeptide (Lys-Gly) (interchain with G-Cter in SUMO)" evidence="5">
    <location>
        <position position="331"/>
    </location>
</feature>
<feature type="splice variant" id="VSP_053886" description="In isoform b." evidence="8">
    <original>NFCR</original>
    <variation>K</variation>
    <location>
        <begin position="311"/>
        <end position="314"/>
    </location>
</feature>
<feature type="mutagenesis site" description="Abolishes palmitoylation and localization to the cilium membrane." evidence="3">
    <original>CCCC</original>
    <variation>ASAS</variation>
    <location>
        <begin position="12"/>
        <end position="15"/>
    </location>
</feature>
<feature type="mutagenesis site" description="Does not affect localization to cilia." evidence="6">
    <original>T</original>
    <variation>N</variation>
    <location>
        <position position="38"/>
    </location>
</feature>
<feature type="mutagenesis site" description="Does not affect sumoylation." evidence="5">
    <original>K</original>
    <variation>R</variation>
    <location>
        <position position="45"/>
    </location>
</feature>
<feature type="mutagenesis site" description="Does not affect sumoylation." evidence="5">
    <original>K</original>
    <variation>R</variation>
    <location>
        <position position="62"/>
    </location>
</feature>
<feature type="mutagenesis site" description="Does not affect sumoylation." evidence="5">
    <original>K</original>
    <variation>R</variation>
    <location>
        <position position="230"/>
    </location>
</feature>
<feature type="mutagenesis site" description="Decreased sumoylation. Abolishes sumoylation; when associated with R-331." evidence="5">
    <original>K</original>
    <variation>R</variation>
    <location>
        <position position="239"/>
    </location>
</feature>
<feature type="mutagenesis site" description="Decreaed sumoylation. Abolishes sumoylation; when associated with R-239." evidence="5">
    <original>K</original>
    <variation>R</variation>
    <location>
        <position position="331"/>
    </location>
</feature>
<feature type="mutagenesis site" description="Amphid cilia are abnormally dispersed and mis-positioned. Defects in intraflagellar transport." evidence="6">
    <location>
        <begin position="366"/>
        <end position="369"/>
    </location>
</feature>
<dbReference type="EMBL" id="FO081769">
    <property type="protein sequence ID" value="CCD73425.1"/>
    <property type="molecule type" value="Genomic_DNA"/>
</dbReference>
<dbReference type="EMBL" id="FO081769">
    <property type="protein sequence ID" value="CCD73426.1"/>
    <property type="molecule type" value="Genomic_DNA"/>
</dbReference>
<dbReference type="RefSeq" id="NP_001032986.1">
    <molecule id="H2L0N8-1"/>
    <property type="nucleotide sequence ID" value="NM_001037897.3"/>
</dbReference>
<dbReference type="RefSeq" id="NP_001032987.1">
    <molecule id="H2L0N8-2"/>
    <property type="nucleotide sequence ID" value="NM_001037898.3"/>
</dbReference>
<dbReference type="SMR" id="H2L0N8"/>
<dbReference type="BioGRID" id="37252">
    <property type="interactions" value="40"/>
</dbReference>
<dbReference type="FunCoup" id="H2L0N8">
    <property type="interactions" value="4"/>
</dbReference>
<dbReference type="STRING" id="6239.Y37E3.5a.1"/>
<dbReference type="PaxDb" id="6239-Y37E3.5a"/>
<dbReference type="EnsemblMetazoa" id="Y37E3.5a.1">
    <molecule id="H2L0N8-1"/>
    <property type="protein sequence ID" value="Y37E3.5a.1"/>
    <property type="gene ID" value="WBGene00021349"/>
</dbReference>
<dbReference type="EnsemblMetazoa" id="Y37E3.5b.1">
    <molecule id="H2L0N8-2"/>
    <property type="protein sequence ID" value="Y37E3.5b.1"/>
    <property type="gene ID" value="WBGene00021349"/>
</dbReference>
<dbReference type="GeneID" id="171765"/>
<dbReference type="KEGG" id="cel:CELE_Y37E3.5"/>
<dbReference type="UCSC" id="Y37E3.5b">
    <property type="organism name" value="c. elegans"/>
</dbReference>
<dbReference type="AGR" id="WB:WBGene00021349"/>
<dbReference type="CTD" id="171765"/>
<dbReference type="WormBase" id="Y37E3.5a">
    <molecule id="H2L0N8-1"/>
    <property type="protein sequence ID" value="CE39044"/>
    <property type="gene ID" value="WBGene00021349"/>
    <property type="gene designation" value="arl-13"/>
</dbReference>
<dbReference type="WormBase" id="Y37E3.5b">
    <molecule id="H2L0N8-2"/>
    <property type="protein sequence ID" value="CE39045"/>
    <property type="gene ID" value="WBGene00021349"/>
    <property type="gene designation" value="arl-13"/>
</dbReference>
<dbReference type="eggNOG" id="KOG0074">
    <property type="taxonomic scope" value="Eukaryota"/>
</dbReference>
<dbReference type="InParanoid" id="H2L0N8"/>
<dbReference type="OMA" id="WFETIFC"/>
<dbReference type="OrthoDB" id="14717at2759"/>
<dbReference type="PhylomeDB" id="H2L0N8"/>
<dbReference type="Reactome" id="R-CEL-9013406">
    <property type="pathway name" value="RHOQ GTPase cycle"/>
</dbReference>
<dbReference type="Reactome" id="R-CEL-9646399">
    <property type="pathway name" value="Aggrephagy"/>
</dbReference>
<dbReference type="PRO" id="PR:H2L0N8"/>
<dbReference type="Proteomes" id="UP000001940">
    <property type="component" value="Chromosome I"/>
</dbReference>
<dbReference type="Bgee" id="WBGene00021349">
    <property type="expression patterns" value="Expressed in pharyngeal muscle cell (C elegans) and 3 other cell types or tissues"/>
</dbReference>
<dbReference type="ExpressionAtlas" id="H2L0N8">
    <property type="expression patterns" value="baseline and differential"/>
</dbReference>
<dbReference type="GO" id="GO:0097543">
    <property type="term" value="C:ciliary inversin compartment"/>
    <property type="evidence" value="ECO:0000314"/>
    <property type="project" value="WormBase"/>
</dbReference>
<dbReference type="GO" id="GO:0060170">
    <property type="term" value="C:ciliary membrane"/>
    <property type="evidence" value="ECO:0000314"/>
    <property type="project" value="UniProtKB"/>
</dbReference>
<dbReference type="GO" id="GO:0005929">
    <property type="term" value="C:cilium"/>
    <property type="evidence" value="ECO:0000314"/>
    <property type="project" value="UniProtKB"/>
</dbReference>
<dbReference type="GO" id="GO:0061917">
    <property type="term" value="C:leading edge of dendritic growth cone"/>
    <property type="evidence" value="ECO:0000314"/>
    <property type="project" value="UniProtKB"/>
</dbReference>
<dbReference type="GO" id="GO:0031528">
    <property type="term" value="C:microvillus membrane"/>
    <property type="evidence" value="ECO:0000314"/>
    <property type="project" value="WormBase"/>
</dbReference>
<dbReference type="GO" id="GO:0097730">
    <property type="term" value="C:non-motile cilium"/>
    <property type="evidence" value="ECO:0000314"/>
    <property type="project" value="UniProtKB"/>
</dbReference>
<dbReference type="GO" id="GO:0005525">
    <property type="term" value="F:GTP binding"/>
    <property type="evidence" value="ECO:0007669"/>
    <property type="project" value="UniProtKB-KW"/>
</dbReference>
<dbReference type="GO" id="GO:0003924">
    <property type="term" value="F:GTPase activity"/>
    <property type="evidence" value="ECO:0007669"/>
    <property type="project" value="InterPro"/>
</dbReference>
<dbReference type="GO" id="GO:0060271">
    <property type="term" value="P:cilium assembly"/>
    <property type="evidence" value="ECO:0000315"/>
    <property type="project" value="UniProtKB"/>
</dbReference>
<dbReference type="GO" id="GO:0042073">
    <property type="term" value="P:intraciliary transport"/>
    <property type="evidence" value="ECO:0000315"/>
    <property type="project" value="UniProtKB"/>
</dbReference>
<dbReference type="GO" id="GO:1905515">
    <property type="term" value="P:non-motile cilium assembly"/>
    <property type="evidence" value="ECO:0000315"/>
    <property type="project" value="WormBase"/>
</dbReference>
<dbReference type="GO" id="GO:0097500">
    <property type="term" value="P:receptor localization to non-motile cilium"/>
    <property type="evidence" value="ECO:0000315"/>
    <property type="project" value="WormBase"/>
</dbReference>
<dbReference type="GO" id="GO:0007606">
    <property type="term" value="P:sensory perception of chemical stimulus"/>
    <property type="evidence" value="ECO:0000315"/>
    <property type="project" value="WormBase"/>
</dbReference>
<dbReference type="Gene3D" id="3.40.50.300">
    <property type="entry name" value="P-loop containing nucleotide triphosphate hydrolases"/>
    <property type="match status" value="1"/>
</dbReference>
<dbReference type="InterPro" id="IPR051995">
    <property type="entry name" value="Ciliary_GTPase"/>
</dbReference>
<dbReference type="InterPro" id="IPR027417">
    <property type="entry name" value="P-loop_NTPase"/>
</dbReference>
<dbReference type="InterPro" id="IPR006689">
    <property type="entry name" value="Small_GTPase_ARF/SAR"/>
</dbReference>
<dbReference type="PANTHER" id="PTHR46090">
    <property type="entry name" value="ADP-RIBOSYLATION FACTOR-LIKE PROTEIN 13B"/>
    <property type="match status" value="1"/>
</dbReference>
<dbReference type="PANTHER" id="PTHR46090:SF2">
    <property type="entry name" value="ADP-RIBOSYLATION FACTOR-LIKE PROTEIN 13B"/>
    <property type="match status" value="1"/>
</dbReference>
<dbReference type="Pfam" id="PF00025">
    <property type="entry name" value="Arf"/>
    <property type="match status" value="1"/>
</dbReference>
<dbReference type="PRINTS" id="PR00328">
    <property type="entry name" value="SAR1GTPBP"/>
</dbReference>
<dbReference type="SMART" id="SM00177">
    <property type="entry name" value="ARF"/>
    <property type="match status" value="1"/>
</dbReference>
<dbReference type="SMART" id="SM00178">
    <property type="entry name" value="SAR"/>
    <property type="match status" value="1"/>
</dbReference>
<dbReference type="SUPFAM" id="SSF52540">
    <property type="entry name" value="P-loop containing nucleoside triphosphate hydrolases"/>
    <property type="match status" value="1"/>
</dbReference>
<dbReference type="PROSITE" id="PS51417">
    <property type="entry name" value="ARF"/>
    <property type="match status" value="1"/>
</dbReference>